<protein>
    <recommendedName>
        <fullName>Protein CNPPD1</fullName>
    </recommendedName>
</protein>
<accession>Q8K158</accession>
<accession>Q3TE87</accession>
<comment type="subcellular location">
    <subcellularLocation>
        <location evidence="2">Membrane</location>
        <topology evidence="2">Single-pass membrane protein</topology>
    </subcellularLocation>
</comment>
<comment type="similarity">
    <text evidence="2">Belongs to the CNPPD1 family.</text>
</comment>
<proteinExistence type="evidence at transcript level"/>
<feature type="chain" id="PRO_0000089353" description="Protein CNPPD1">
    <location>
        <begin position="1"/>
        <end position="407"/>
    </location>
</feature>
<feature type="transmembrane region" description="Helical" evidence="1">
    <location>
        <begin position="233"/>
        <end position="253"/>
    </location>
</feature>
<evidence type="ECO:0000255" key="1"/>
<evidence type="ECO:0000305" key="2"/>
<organism>
    <name type="scientific">Mus musculus</name>
    <name type="common">Mouse</name>
    <dbReference type="NCBI Taxonomy" id="10090"/>
    <lineage>
        <taxon>Eukaryota</taxon>
        <taxon>Metazoa</taxon>
        <taxon>Chordata</taxon>
        <taxon>Craniata</taxon>
        <taxon>Vertebrata</taxon>
        <taxon>Euteleostomi</taxon>
        <taxon>Mammalia</taxon>
        <taxon>Eutheria</taxon>
        <taxon>Euarchontoglires</taxon>
        <taxon>Glires</taxon>
        <taxon>Rodentia</taxon>
        <taxon>Myomorpha</taxon>
        <taxon>Muroidea</taxon>
        <taxon>Muridae</taxon>
        <taxon>Murinae</taxon>
        <taxon>Mus</taxon>
        <taxon>Mus</taxon>
    </lineage>
</organism>
<dbReference type="EMBL" id="BC028815">
    <property type="protein sequence ID" value="AAH28815.1"/>
    <property type="molecule type" value="mRNA"/>
</dbReference>
<dbReference type="EMBL" id="AK029090">
    <property type="protein sequence ID" value="BAC26289.1"/>
    <property type="molecule type" value="mRNA"/>
</dbReference>
<dbReference type="EMBL" id="AK169779">
    <property type="protein sequence ID" value="BAE41361.1"/>
    <property type="molecule type" value="mRNA"/>
</dbReference>
<dbReference type="CCDS" id="CCDS15063.1"/>
<dbReference type="RefSeq" id="NP_001343193.1">
    <property type="nucleotide sequence ID" value="NM_001356264.1"/>
</dbReference>
<dbReference type="RefSeq" id="NP_081253.1">
    <property type="nucleotide sequence ID" value="NM_026977.3"/>
</dbReference>
<dbReference type="RefSeq" id="XP_006496603.1">
    <property type="nucleotide sequence ID" value="XM_006496540.2"/>
</dbReference>
<dbReference type="RefSeq" id="XP_006496604.1">
    <property type="nucleotide sequence ID" value="XM_006496541.4"/>
</dbReference>
<dbReference type="RefSeq" id="XP_006496605.1">
    <property type="nucleotide sequence ID" value="XM_006496542.4"/>
</dbReference>
<dbReference type="SMR" id="Q8K158"/>
<dbReference type="FunCoup" id="Q8K158">
    <property type="interactions" value="1475"/>
</dbReference>
<dbReference type="STRING" id="10090.ENSMUSP00000132688"/>
<dbReference type="PhosphoSitePlus" id="Q8K158"/>
<dbReference type="PaxDb" id="10090-ENSMUSP00000132688"/>
<dbReference type="Antibodypedia" id="47668">
    <property type="antibodies" value="63 antibodies from 16 providers"/>
</dbReference>
<dbReference type="DNASU" id="69171"/>
<dbReference type="Ensembl" id="ENSMUST00000041213.12">
    <property type="protein sequence ID" value="ENSMUSP00000044799.6"/>
    <property type="gene ID" value="ENSMUSG00000033159.15"/>
</dbReference>
<dbReference type="Ensembl" id="ENSMUST00000168720.8">
    <property type="protein sequence ID" value="ENSMUSP00000132688.2"/>
    <property type="gene ID" value="ENSMUSG00000033159.15"/>
</dbReference>
<dbReference type="Ensembl" id="ENSMUST00000190679.7">
    <property type="protein sequence ID" value="ENSMUSP00000140289.2"/>
    <property type="gene ID" value="ENSMUSG00000033159.15"/>
</dbReference>
<dbReference type="GeneID" id="69171"/>
<dbReference type="KEGG" id="mmu:69171"/>
<dbReference type="UCSC" id="uc007bnp.1">
    <property type="organism name" value="mouse"/>
</dbReference>
<dbReference type="AGR" id="MGI:1916421"/>
<dbReference type="CTD" id="27013"/>
<dbReference type="MGI" id="MGI:1916421">
    <property type="gene designation" value="Cnppd1"/>
</dbReference>
<dbReference type="VEuPathDB" id="HostDB:ENSMUSG00000033159"/>
<dbReference type="eggNOG" id="KOG1674">
    <property type="taxonomic scope" value="Eukaryota"/>
</dbReference>
<dbReference type="GeneTree" id="ENSGT00390000000862"/>
<dbReference type="HOGENOM" id="CLU_051510_0_0_1"/>
<dbReference type="InParanoid" id="Q8K158"/>
<dbReference type="OMA" id="SPWYHTH"/>
<dbReference type="OrthoDB" id="244495at2759"/>
<dbReference type="PhylomeDB" id="Q8K158"/>
<dbReference type="TreeFam" id="TF105853"/>
<dbReference type="BioGRID-ORCS" id="69171">
    <property type="hits" value="0 hits in 80 CRISPR screens"/>
</dbReference>
<dbReference type="ChiTaRS" id="Cnppd1">
    <property type="organism name" value="mouse"/>
</dbReference>
<dbReference type="PRO" id="PR:Q8K158"/>
<dbReference type="Proteomes" id="UP000000589">
    <property type="component" value="Chromosome 1"/>
</dbReference>
<dbReference type="RNAct" id="Q8K158">
    <property type="molecule type" value="protein"/>
</dbReference>
<dbReference type="Bgee" id="ENSMUSG00000033159">
    <property type="expression patterns" value="Expressed in granulocyte and 251 other cell types or tissues"/>
</dbReference>
<dbReference type="ExpressionAtlas" id="Q8K158">
    <property type="expression patterns" value="baseline and differential"/>
</dbReference>
<dbReference type="GO" id="GO:0016020">
    <property type="term" value="C:membrane"/>
    <property type="evidence" value="ECO:0007669"/>
    <property type="project" value="UniProtKB-SubCell"/>
</dbReference>
<dbReference type="GO" id="GO:0019901">
    <property type="term" value="F:protein kinase binding"/>
    <property type="evidence" value="ECO:0007669"/>
    <property type="project" value="InterPro"/>
</dbReference>
<dbReference type="CDD" id="cd20557">
    <property type="entry name" value="CYCLIN_ScPCL1-like"/>
    <property type="match status" value="1"/>
</dbReference>
<dbReference type="Gene3D" id="1.10.472.10">
    <property type="entry name" value="Cyclin-like"/>
    <property type="match status" value="1"/>
</dbReference>
<dbReference type="InterPro" id="IPR013922">
    <property type="entry name" value="Cyclin_PHO80-like"/>
</dbReference>
<dbReference type="PANTHER" id="PTHR15615">
    <property type="match status" value="1"/>
</dbReference>
<dbReference type="PANTHER" id="PTHR15615:SF108">
    <property type="entry name" value="PROTEIN CNPPD1"/>
    <property type="match status" value="1"/>
</dbReference>
<dbReference type="Pfam" id="PF08613">
    <property type="entry name" value="Cyclin"/>
    <property type="match status" value="1"/>
</dbReference>
<gene>
    <name type="primary">Cnppd1</name>
</gene>
<name>CNPD1_MOUSE</name>
<keyword id="KW-0472">Membrane</keyword>
<keyword id="KW-1185">Reference proteome</keyword>
<keyword id="KW-0812">Transmembrane</keyword>
<keyword id="KW-1133">Transmembrane helix</keyword>
<sequence>MDLTGLLLDEEGAFSLTGFQDFMVLPGHQKLSARIRRRLYYGWDLETDCSLEELSSPVADITVELLQKAAPSPIRRLQKKYVAHVSREACISPCAMMLALVYIERLRHRNPDYLQHVSSSDLFLISMMVASKYLYDEGEEEEVFNDEWGAAGGVAVATLNALERSFLSAMDWRLYTDPREIFEVLSWLESCVAEQQGRRRGWYTYTDLCVLLEQPTWQLALGSLCQRLVKLSCLLAVAYVSSVALAVASVAVIHQSLGLSSSPSPGPPELTLVSKSLVQPCVPAPVSQCLTNVSSCLEGSVDLPSLWGSLLAPLTPPLRPPPDPPAPPTPLHKCPLCQKFQRLPPNCRACHTNQTVSIGPSRPLYHARGLAPPWLWSPVAPPFLQPQQCSLFSVMELAHLKSVISPG</sequence>
<reference key="1">
    <citation type="journal article" date="2005" name="Science">
        <title>The transcriptional landscape of the mammalian genome.</title>
        <authorList>
            <person name="Carninci P."/>
            <person name="Kasukawa T."/>
            <person name="Katayama S."/>
            <person name="Gough J."/>
            <person name="Frith M.C."/>
            <person name="Maeda N."/>
            <person name="Oyama R."/>
            <person name="Ravasi T."/>
            <person name="Lenhard B."/>
            <person name="Wells C."/>
            <person name="Kodzius R."/>
            <person name="Shimokawa K."/>
            <person name="Bajic V.B."/>
            <person name="Brenner S.E."/>
            <person name="Batalov S."/>
            <person name="Forrest A.R."/>
            <person name="Zavolan M."/>
            <person name="Davis M.J."/>
            <person name="Wilming L.G."/>
            <person name="Aidinis V."/>
            <person name="Allen J.E."/>
            <person name="Ambesi-Impiombato A."/>
            <person name="Apweiler R."/>
            <person name="Aturaliya R.N."/>
            <person name="Bailey T.L."/>
            <person name="Bansal M."/>
            <person name="Baxter L."/>
            <person name="Beisel K.W."/>
            <person name="Bersano T."/>
            <person name="Bono H."/>
            <person name="Chalk A.M."/>
            <person name="Chiu K.P."/>
            <person name="Choudhary V."/>
            <person name="Christoffels A."/>
            <person name="Clutterbuck D.R."/>
            <person name="Crowe M.L."/>
            <person name="Dalla E."/>
            <person name="Dalrymple B.P."/>
            <person name="de Bono B."/>
            <person name="Della Gatta G."/>
            <person name="di Bernardo D."/>
            <person name="Down T."/>
            <person name="Engstrom P."/>
            <person name="Fagiolini M."/>
            <person name="Faulkner G."/>
            <person name="Fletcher C.F."/>
            <person name="Fukushima T."/>
            <person name="Furuno M."/>
            <person name="Futaki S."/>
            <person name="Gariboldi M."/>
            <person name="Georgii-Hemming P."/>
            <person name="Gingeras T.R."/>
            <person name="Gojobori T."/>
            <person name="Green R.E."/>
            <person name="Gustincich S."/>
            <person name="Harbers M."/>
            <person name="Hayashi Y."/>
            <person name="Hensch T.K."/>
            <person name="Hirokawa N."/>
            <person name="Hill D."/>
            <person name="Huminiecki L."/>
            <person name="Iacono M."/>
            <person name="Ikeo K."/>
            <person name="Iwama A."/>
            <person name="Ishikawa T."/>
            <person name="Jakt M."/>
            <person name="Kanapin A."/>
            <person name="Katoh M."/>
            <person name="Kawasawa Y."/>
            <person name="Kelso J."/>
            <person name="Kitamura H."/>
            <person name="Kitano H."/>
            <person name="Kollias G."/>
            <person name="Krishnan S.P."/>
            <person name="Kruger A."/>
            <person name="Kummerfeld S.K."/>
            <person name="Kurochkin I.V."/>
            <person name="Lareau L.F."/>
            <person name="Lazarevic D."/>
            <person name="Lipovich L."/>
            <person name="Liu J."/>
            <person name="Liuni S."/>
            <person name="McWilliam S."/>
            <person name="Madan Babu M."/>
            <person name="Madera M."/>
            <person name="Marchionni L."/>
            <person name="Matsuda H."/>
            <person name="Matsuzawa S."/>
            <person name="Miki H."/>
            <person name="Mignone F."/>
            <person name="Miyake S."/>
            <person name="Morris K."/>
            <person name="Mottagui-Tabar S."/>
            <person name="Mulder N."/>
            <person name="Nakano N."/>
            <person name="Nakauchi H."/>
            <person name="Ng P."/>
            <person name="Nilsson R."/>
            <person name="Nishiguchi S."/>
            <person name="Nishikawa S."/>
            <person name="Nori F."/>
            <person name="Ohara O."/>
            <person name="Okazaki Y."/>
            <person name="Orlando V."/>
            <person name="Pang K.C."/>
            <person name="Pavan W.J."/>
            <person name="Pavesi G."/>
            <person name="Pesole G."/>
            <person name="Petrovsky N."/>
            <person name="Piazza S."/>
            <person name="Reed J."/>
            <person name="Reid J.F."/>
            <person name="Ring B.Z."/>
            <person name="Ringwald M."/>
            <person name="Rost B."/>
            <person name="Ruan Y."/>
            <person name="Salzberg S.L."/>
            <person name="Sandelin A."/>
            <person name="Schneider C."/>
            <person name="Schoenbach C."/>
            <person name="Sekiguchi K."/>
            <person name="Semple C.A."/>
            <person name="Seno S."/>
            <person name="Sessa L."/>
            <person name="Sheng Y."/>
            <person name="Shibata Y."/>
            <person name="Shimada H."/>
            <person name="Shimada K."/>
            <person name="Silva D."/>
            <person name="Sinclair B."/>
            <person name="Sperling S."/>
            <person name="Stupka E."/>
            <person name="Sugiura K."/>
            <person name="Sultana R."/>
            <person name="Takenaka Y."/>
            <person name="Taki K."/>
            <person name="Tammoja K."/>
            <person name="Tan S.L."/>
            <person name="Tang S."/>
            <person name="Taylor M.S."/>
            <person name="Tegner J."/>
            <person name="Teichmann S.A."/>
            <person name="Ueda H.R."/>
            <person name="van Nimwegen E."/>
            <person name="Verardo R."/>
            <person name="Wei C.L."/>
            <person name="Yagi K."/>
            <person name="Yamanishi H."/>
            <person name="Zabarovsky E."/>
            <person name="Zhu S."/>
            <person name="Zimmer A."/>
            <person name="Hide W."/>
            <person name="Bult C."/>
            <person name="Grimmond S.M."/>
            <person name="Teasdale R.D."/>
            <person name="Liu E.T."/>
            <person name="Brusic V."/>
            <person name="Quackenbush J."/>
            <person name="Wahlestedt C."/>
            <person name="Mattick J.S."/>
            <person name="Hume D.A."/>
            <person name="Kai C."/>
            <person name="Sasaki D."/>
            <person name="Tomaru Y."/>
            <person name="Fukuda S."/>
            <person name="Kanamori-Katayama M."/>
            <person name="Suzuki M."/>
            <person name="Aoki J."/>
            <person name="Arakawa T."/>
            <person name="Iida J."/>
            <person name="Imamura K."/>
            <person name="Itoh M."/>
            <person name="Kato T."/>
            <person name="Kawaji H."/>
            <person name="Kawagashira N."/>
            <person name="Kawashima T."/>
            <person name="Kojima M."/>
            <person name="Kondo S."/>
            <person name="Konno H."/>
            <person name="Nakano K."/>
            <person name="Ninomiya N."/>
            <person name="Nishio T."/>
            <person name="Okada M."/>
            <person name="Plessy C."/>
            <person name="Shibata K."/>
            <person name="Shiraki T."/>
            <person name="Suzuki S."/>
            <person name="Tagami M."/>
            <person name="Waki K."/>
            <person name="Watahiki A."/>
            <person name="Okamura-Oho Y."/>
            <person name="Suzuki H."/>
            <person name="Kawai J."/>
            <person name="Hayashizaki Y."/>
        </authorList>
    </citation>
    <scope>NUCLEOTIDE SEQUENCE [LARGE SCALE MRNA]</scope>
    <source>
        <strain>NOD</strain>
        <tissue>Thymus</tissue>
    </source>
</reference>
<reference key="2">
    <citation type="journal article" date="2004" name="Genome Res.">
        <title>The status, quality, and expansion of the NIH full-length cDNA project: the Mammalian Gene Collection (MGC).</title>
        <authorList>
            <consortium name="The MGC Project Team"/>
        </authorList>
    </citation>
    <scope>NUCLEOTIDE SEQUENCE [LARGE SCALE MRNA]</scope>
    <source>
        <strain>FVB/N</strain>
        <tissue>Liver</tissue>
    </source>
</reference>